<feature type="chain" id="PRO_0000035981" description="viral Ubiquitin">
    <location>
        <begin position="1"/>
        <end position="76"/>
    </location>
</feature>
<feature type="propeptide" id="PRO_0000035982" evidence="4">
    <location>
        <position position="77"/>
    </location>
</feature>
<feature type="cross-link" description="Glycyl lysine isopeptide (Lys-Gly) (interchain with G-Cter in ubiquitin)" evidence="1">
    <location>
        <position position="48"/>
    </location>
</feature>
<feature type="cross-link" description="Glycyl lysine isopeptide (Gly-Lys) (interchain with K-? in acceptor proteins)" evidence="2">
    <location>
        <position position="76"/>
    </location>
</feature>
<feature type="sequence conflict" description="In Ref. 2; AAA46751." evidence="4" ref="2">
    <original>A</original>
    <variation>E</variation>
    <location>
        <position position="20"/>
    </location>
</feature>
<feature type="strand" evidence="5">
    <location>
        <begin position="4"/>
        <end position="7"/>
    </location>
</feature>
<feature type="strand" evidence="5">
    <location>
        <begin position="19"/>
        <end position="21"/>
    </location>
</feature>
<feature type="helix" evidence="5">
    <location>
        <begin position="22"/>
        <end position="34"/>
    </location>
</feature>
<feature type="turn" evidence="5">
    <location>
        <begin position="38"/>
        <end position="40"/>
    </location>
</feature>
<feature type="strand" evidence="5">
    <location>
        <begin position="42"/>
        <end position="45"/>
    </location>
</feature>
<feature type="strand" evidence="5">
    <location>
        <begin position="48"/>
        <end position="50"/>
    </location>
</feature>
<feature type="turn" evidence="5">
    <location>
        <begin position="56"/>
        <end position="60"/>
    </location>
</feature>
<feature type="strand" evidence="5">
    <location>
        <begin position="66"/>
        <end position="70"/>
    </location>
</feature>
<protein>
    <recommendedName>
        <fullName>viral Ubiquitin</fullName>
    </recommendedName>
</protein>
<keyword id="KW-0002">3D-structure</keyword>
<keyword id="KW-1035">Host cytoplasm</keyword>
<keyword id="KW-1048">Host nucleus</keyword>
<keyword id="KW-0945">Host-virus interaction</keyword>
<keyword id="KW-1017">Isopeptide bond</keyword>
<keyword id="KW-0426">Late protein</keyword>
<keyword id="KW-1129">Modulation of host ubiquitin pathway by viral ubl</keyword>
<keyword id="KW-1130">Modulation of host ubiquitin pathway by virus</keyword>
<keyword id="KW-1185">Reference proteome</keyword>
<keyword id="KW-0832">Ubl conjugation</keyword>
<keyword id="KW-0833">Ubl conjugation pathway</keyword>
<sequence length="77" mass="8653">MQIFIKTLTGKTITAETEPAETVADLKQKIADKEGVPVDQQRLIFAGKQLEDSKTMADYNIQKESTLHMVLRLRGGY</sequence>
<organismHost>
    <name type="scientific">Lepidoptera</name>
    <name type="common">butterflies and moths</name>
    <dbReference type="NCBI Taxonomy" id="7088"/>
</organismHost>
<name>UBIL_NPVAC</name>
<comment type="function">
    <text evidence="3">Viral ubiquitin that may play a role in the viral ubiquitination of nucleocapsid proteins to direct the egress of the nucleocapsid out of the nucleus, therefore mediating the formation of budded virus (BV).</text>
</comment>
<comment type="subcellular location">
    <subcellularLocation>
        <location evidence="3">Host nucleus</location>
    </subcellularLocation>
    <subcellularLocation>
        <location evidence="3">Host cytoplasm</location>
    </subcellularLocation>
    <text evidence="3">Localizes in the ring zone of the host nucleus, and also in the cytoplasm.</text>
</comment>
<comment type="similarity">
    <text evidence="4">Belongs to the ubiquitin family.</text>
</comment>
<accession>P16709</accession>
<gene>
    <name type="primary">vUbi</name>
</gene>
<dbReference type="EMBL" id="M30305">
    <property type="protein sequence ID" value="AAA46751.1"/>
    <property type="molecule type" value="Genomic_DNA"/>
</dbReference>
<dbReference type="EMBL" id="M37122">
    <property type="protein sequence ID" value="AAA46685.1"/>
    <property type="molecule type" value="Genomic_DNA"/>
</dbReference>
<dbReference type="EMBL" id="L22858">
    <property type="protein sequence ID" value="AAA66665.1"/>
    <property type="molecule type" value="Genomic_DNA"/>
</dbReference>
<dbReference type="PIR" id="A34813">
    <property type="entry name" value="UQNVAC"/>
</dbReference>
<dbReference type="PIR" id="C72854">
    <property type="entry name" value="C72854"/>
</dbReference>
<dbReference type="PDB" id="6KNA">
    <property type="method" value="NMR"/>
    <property type="chains" value="A=1-76"/>
</dbReference>
<dbReference type="PDBsum" id="6KNA"/>
<dbReference type="SMR" id="P16709"/>
<dbReference type="KEGG" id="vg:1403867"/>
<dbReference type="OrthoDB" id="19231at10239"/>
<dbReference type="Proteomes" id="UP000008292">
    <property type="component" value="Segment"/>
</dbReference>
<dbReference type="GO" id="GO:0030430">
    <property type="term" value="C:host cell cytoplasm"/>
    <property type="evidence" value="ECO:0007669"/>
    <property type="project" value="UniProtKB-SubCell"/>
</dbReference>
<dbReference type="GO" id="GO:0042025">
    <property type="term" value="C:host cell nucleus"/>
    <property type="evidence" value="ECO:0007669"/>
    <property type="project" value="UniProtKB-SubCell"/>
</dbReference>
<dbReference type="GO" id="GO:0039648">
    <property type="term" value="P:symbiont-mediated perturbation of host ubiquitin-like protein modification"/>
    <property type="evidence" value="ECO:0007669"/>
    <property type="project" value="UniProtKB-KW"/>
</dbReference>
<dbReference type="FunFam" id="3.10.20.90:FF:000009">
    <property type="entry name" value="Ubiquitin-60S ribosomal protein"/>
    <property type="match status" value="1"/>
</dbReference>
<dbReference type="Gene3D" id="3.10.20.90">
    <property type="entry name" value="Phosphatidylinositol 3-kinase Catalytic Subunit, Chain A, domain 1"/>
    <property type="match status" value="1"/>
</dbReference>
<dbReference type="InterPro" id="IPR000626">
    <property type="entry name" value="Ubiquitin-like_dom"/>
</dbReference>
<dbReference type="InterPro" id="IPR029071">
    <property type="entry name" value="Ubiquitin-like_domsf"/>
</dbReference>
<dbReference type="InterPro" id="IPR019954">
    <property type="entry name" value="Ubiquitin_CS"/>
</dbReference>
<dbReference type="InterPro" id="IPR019956">
    <property type="entry name" value="Ubiquitin_dom"/>
</dbReference>
<dbReference type="InterPro" id="IPR050158">
    <property type="entry name" value="Ubiquitin_ubiquitin-like"/>
</dbReference>
<dbReference type="PANTHER" id="PTHR10666">
    <property type="entry name" value="UBIQUITIN"/>
    <property type="match status" value="1"/>
</dbReference>
<dbReference type="Pfam" id="PF00240">
    <property type="entry name" value="ubiquitin"/>
    <property type="match status" value="1"/>
</dbReference>
<dbReference type="PRINTS" id="PR00348">
    <property type="entry name" value="UBIQUITIN"/>
</dbReference>
<dbReference type="SMART" id="SM00213">
    <property type="entry name" value="UBQ"/>
    <property type="match status" value="1"/>
</dbReference>
<dbReference type="SUPFAM" id="SSF54236">
    <property type="entry name" value="Ubiquitin-like"/>
    <property type="match status" value="1"/>
</dbReference>
<dbReference type="PROSITE" id="PS00299">
    <property type="entry name" value="UBIQUITIN_1"/>
    <property type="match status" value="1"/>
</dbReference>
<dbReference type="PROSITE" id="PS50053">
    <property type="entry name" value="UBIQUITIN_2"/>
    <property type="match status" value="1"/>
</dbReference>
<reference key="1">
    <citation type="journal article" date="1986" name="J. Virol.">
        <title>Functional mapping of a trans-activating gene required for expression of a baculovirus delayed-early gene.</title>
        <authorList>
            <person name="Guarino L.A."/>
            <person name="Summers M.D."/>
        </authorList>
    </citation>
    <scope>NUCLEOTIDE SEQUENCE [GENOMIC DNA]</scope>
    <source>
        <strain>E2</strain>
    </source>
</reference>
<reference key="2">
    <citation type="journal article" date="1990" name="Proc. Natl. Acad. Sci. U.S.A.">
        <title>Identification of a viral gene encoding a ubiquitin-like protein.</title>
        <authorList>
            <person name="Guarino L.A."/>
        </authorList>
    </citation>
    <scope>NUCLEOTIDE SEQUENCE [GENOMIC DNA]</scope>
</reference>
<reference key="3">
    <citation type="journal article" date="1990" name="Virology">
        <title>Nucleotide sequence and characterization of the 39K gene region of Autographa californica nuclear polyhedrosis virus.</title>
        <authorList>
            <person name="Guarino L.A."/>
            <person name="Smith M.W."/>
        </authorList>
    </citation>
    <scope>NUCLEOTIDE SEQUENCE [GENOMIC DNA]</scope>
</reference>
<reference key="4">
    <citation type="journal article" date="1994" name="Virology">
        <title>The complete DNA sequence of Autographa californica nuclear polyhedrosis virus.</title>
        <authorList>
            <person name="Ayres M.D."/>
            <person name="Howard S.C."/>
            <person name="Kuzio J."/>
            <person name="Lopez-Ferber M."/>
            <person name="Possee R.D."/>
        </authorList>
    </citation>
    <scope>NUCLEOTIDE SEQUENCE [LARGE SCALE GENOMIC DNA]</scope>
    <source>
        <strain>C6</strain>
    </source>
</reference>
<reference key="5">
    <citation type="journal article" date="2018" name="J. Virol.">
        <title>Autographa californica Nucleopolyhedrovirus AC141 (Exon0), a potential E3 ubiquitin ligase, interacts with viral Ubiquitin and AC66 to facilitate nucleocapsid egress.</title>
        <authorList>
            <person name="Biswas S."/>
            <person name="Willis L.G."/>
            <person name="Fang M."/>
            <person name="Nie Y."/>
            <person name="Theilmann D.A."/>
        </authorList>
    </citation>
    <scope>INTERACTION WITH IE0 AND VUBI</scope>
    <scope>SUBCELLULAR LOCATION</scope>
</reference>
<organism>
    <name type="scientific">Autographa californica nuclear polyhedrosis virus</name>
    <name type="common">AcMNPV</name>
    <dbReference type="NCBI Taxonomy" id="46015"/>
    <lineage>
        <taxon>Viruses</taxon>
        <taxon>Viruses incertae sedis</taxon>
        <taxon>Naldaviricetes</taxon>
        <taxon>Lefavirales</taxon>
        <taxon>Baculoviridae</taxon>
        <taxon>Alphabaculovirus</taxon>
        <taxon>Alphabaculovirus aucalifornicae</taxon>
    </lineage>
</organism>
<proteinExistence type="evidence at protein level"/>
<evidence type="ECO:0000250" key="1"/>
<evidence type="ECO:0000255" key="2">
    <source>
        <dbReference type="PROSITE-ProRule" id="PRU00214"/>
    </source>
</evidence>
<evidence type="ECO:0000269" key="3">
    <source>
    </source>
</evidence>
<evidence type="ECO:0000305" key="4"/>
<evidence type="ECO:0007829" key="5">
    <source>
        <dbReference type="PDB" id="6KNA"/>
    </source>
</evidence>